<protein>
    <recommendedName>
        <fullName evidence="1">3-isopropylmalate dehydratase small subunit</fullName>
        <ecNumber evidence="1">4.2.1.33</ecNumber>
    </recommendedName>
    <alternativeName>
        <fullName evidence="1">Alpha-IPM isomerase</fullName>
        <shortName evidence="1">IPMI</shortName>
    </alternativeName>
    <alternativeName>
        <fullName evidence="1">Isopropylmalate isomerase</fullName>
    </alternativeName>
</protein>
<proteinExistence type="inferred from homology"/>
<evidence type="ECO:0000255" key="1">
    <source>
        <dbReference type="HAMAP-Rule" id="MF_01031"/>
    </source>
</evidence>
<reference key="1">
    <citation type="submission" date="2007-04" db="EMBL/GenBank/DDBJ databases">
        <title>Complete genome sequence of the nitrogen-fixing bacterium Azorhizobium caulinodans ORS571.</title>
        <authorList>
            <person name="Lee K.B."/>
            <person name="Backer P.D."/>
            <person name="Aono T."/>
            <person name="Liu C.T."/>
            <person name="Suzuki S."/>
            <person name="Suzuki T."/>
            <person name="Kaneko T."/>
            <person name="Yamada M."/>
            <person name="Tabata S."/>
            <person name="Kupfer D.M."/>
            <person name="Najar F.Z."/>
            <person name="Wiley G.B."/>
            <person name="Roe B."/>
            <person name="Binnewies T."/>
            <person name="Ussery D."/>
            <person name="Vereecke D."/>
            <person name="Gevers D."/>
            <person name="Holsters M."/>
            <person name="Oyaizu H."/>
        </authorList>
    </citation>
    <scope>NUCLEOTIDE SEQUENCE [LARGE SCALE GENOMIC DNA]</scope>
    <source>
        <strain>ATCC 43989 / DSM 5975 / JCM 20966 / LMG 6465 / NBRC 14845 / NCIMB 13405 / ORS 571</strain>
    </source>
</reference>
<keyword id="KW-0028">Amino-acid biosynthesis</keyword>
<keyword id="KW-0100">Branched-chain amino acid biosynthesis</keyword>
<keyword id="KW-0432">Leucine biosynthesis</keyword>
<keyword id="KW-0456">Lyase</keyword>
<keyword id="KW-1185">Reference proteome</keyword>
<name>LEUD_AZOC5</name>
<feature type="chain" id="PRO_1000072956" description="3-isopropylmalate dehydratase small subunit">
    <location>
        <begin position="1"/>
        <end position="201"/>
    </location>
</feature>
<comment type="function">
    <text evidence="1">Catalyzes the isomerization between 2-isopropylmalate and 3-isopropylmalate, via the formation of 2-isopropylmaleate.</text>
</comment>
<comment type="catalytic activity">
    <reaction evidence="1">
        <text>(2R,3S)-3-isopropylmalate = (2S)-2-isopropylmalate</text>
        <dbReference type="Rhea" id="RHEA:32287"/>
        <dbReference type="ChEBI" id="CHEBI:1178"/>
        <dbReference type="ChEBI" id="CHEBI:35121"/>
        <dbReference type="EC" id="4.2.1.33"/>
    </reaction>
</comment>
<comment type="pathway">
    <text evidence="1">Amino-acid biosynthesis; L-leucine biosynthesis; L-leucine from 3-methyl-2-oxobutanoate: step 2/4.</text>
</comment>
<comment type="subunit">
    <text evidence="1">Heterodimer of LeuC and LeuD.</text>
</comment>
<comment type="similarity">
    <text evidence="1">Belongs to the LeuD family. LeuD type 1 subfamily.</text>
</comment>
<dbReference type="EC" id="4.2.1.33" evidence="1"/>
<dbReference type="EMBL" id="AP009384">
    <property type="protein sequence ID" value="BAF90055.1"/>
    <property type="molecule type" value="Genomic_DNA"/>
</dbReference>
<dbReference type="RefSeq" id="WP_012172577.1">
    <property type="nucleotide sequence ID" value="NC_009937.1"/>
</dbReference>
<dbReference type="SMR" id="A8ILN3"/>
<dbReference type="STRING" id="438753.AZC_4057"/>
<dbReference type="KEGG" id="azc:AZC_4057"/>
<dbReference type="eggNOG" id="COG0066">
    <property type="taxonomic scope" value="Bacteria"/>
</dbReference>
<dbReference type="HOGENOM" id="CLU_081378_0_3_5"/>
<dbReference type="UniPathway" id="UPA00048">
    <property type="reaction ID" value="UER00071"/>
</dbReference>
<dbReference type="Proteomes" id="UP000000270">
    <property type="component" value="Chromosome"/>
</dbReference>
<dbReference type="GO" id="GO:0009316">
    <property type="term" value="C:3-isopropylmalate dehydratase complex"/>
    <property type="evidence" value="ECO:0007669"/>
    <property type="project" value="InterPro"/>
</dbReference>
<dbReference type="GO" id="GO:0003861">
    <property type="term" value="F:3-isopropylmalate dehydratase activity"/>
    <property type="evidence" value="ECO:0007669"/>
    <property type="project" value="UniProtKB-UniRule"/>
</dbReference>
<dbReference type="GO" id="GO:0009098">
    <property type="term" value="P:L-leucine biosynthetic process"/>
    <property type="evidence" value="ECO:0007669"/>
    <property type="project" value="UniProtKB-UniRule"/>
</dbReference>
<dbReference type="CDD" id="cd01577">
    <property type="entry name" value="IPMI_Swivel"/>
    <property type="match status" value="1"/>
</dbReference>
<dbReference type="FunFam" id="3.20.19.10:FF:000003">
    <property type="entry name" value="3-isopropylmalate dehydratase small subunit"/>
    <property type="match status" value="1"/>
</dbReference>
<dbReference type="Gene3D" id="3.20.19.10">
    <property type="entry name" value="Aconitase, domain 4"/>
    <property type="match status" value="1"/>
</dbReference>
<dbReference type="HAMAP" id="MF_01031">
    <property type="entry name" value="LeuD_type1"/>
    <property type="match status" value="1"/>
</dbReference>
<dbReference type="InterPro" id="IPR004431">
    <property type="entry name" value="3-IsopropMal_deHydase_ssu"/>
</dbReference>
<dbReference type="InterPro" id="IPR015928">
    <property type="entry name" value="Aconitase/3IPM_dehydase_swvl"/>
</dbReference>
<dbReference type="InterPro" id="IPR000573">
    <property type="entry name" value="AconitaseA/IPMdHydase_ssu_swvl"/>
</dbReference>
<dbReference type="InterPro" id="IPR033940">
    <property type="entry name" value="IPMI_Swivel"/>
</dbReference>
<dbReference type="InterPro" id="IPR050075">
    <property type="entry name" value="LeuD"/>
</dbReference>
<dbReference type="NCBIfam" id="TIGR00171">
    <property type="entry name" value="leuD"/>
    <property type="match status" value="1"/>
</dbReference>
<dbReference type="NCBIfam" id="NF002458">
    <property type="entry name" value="PRK01641.1"/>
    <property type="match status" value="1"/>
</dbReference>
<dbReference type="PANTHER" id="PTHR43345:SF5">
    <property type="entry name" value="3-ISOPROPYLMALATE DEHYDRATASE SMALL SUBUNIT"/>
    <property type="match status" value="1"/>
</dbReference>
<dbReference type="PANTHER" id="PTHR43345">
    <property type="entry name" value="3-ISOPROPYLMALATE DEHYDRATASE SMALL SUBUNIT 2-RELATED-RELATED"/>
    <property type="match status" value="1"/>
</dbReference>
<dbReference type="Pfam" id="PF00694">
    <property type="entry name" value="Aconitase_C"/>
    <property type="match status" value="1"/>
</dbReference>
<dbReference type="SUPFAM" id="SSF52016">
    <property type="entry name" value="LeuD/IlvD-like"/>
    <property type="match status" value="1"/>
</dbReference>
<gene>
    <name evidence="1" type="primary">leuD</name>
    <name type="ordered locus">AZC_4057</name>
</gene>
<organism>
    <name type="scientific">Azorhizobium caulinodans (strain ATCC 43989 / DSM 5975 / JCM 20966 / LMG 6465 / NBRC 14845 / NCIMB 13405 / ORS 571)</name>
    <dbReference type="NCBI Taxonomy" id="438753"/>
    <lineage>
        <taxon>Bacteria</taxon>
        <taxon>Pseudomonadati</taxon>
        <taxon>Pseudomonadota</taxon>
        <taxon>Alphaproteobacteria</taxon>
        <taxon>Hyphomicrobiales</taxon>
        <taxon>Xanthobacteraceae</taxon>
        <taxon>Azorhizobium</taxon>
    </lineage>
</organism>
<sequence length="201" mass="22318">MEKFTTLEGVAAPLKIVNVDTDMIIPKQYLKTIKRTGLGTGLFSEMRYKEDGSDNPDFVLNQPAYRNAKIIVAGDNFGCGSSREHAPWALLDFGIRCVISTSFADIFYNNCFKNGILPIVVSKDDLDKLFDDADRGANATLTIDLAAQEIRGPDGGTVKFEIDPFRKRCLLEGLDDIGLTLEKGTQIDTYEGEKKTEQPWL</sequence>
<accession>A8ILN3</accession>